<protein>
    <recommendedName>
        <fullName>Lysozyme A</fullName>
        <ecNumber>3.2.1.n3</ecNumber>
    </recommendedName>
    <alternativeName>
        <fullName>1,4-beta-N-acetylmuramidase A</fullName>
    </alternativeName>
</protein>
<accession>Q8T1G4</accession>
<accession>Q554H2</accession>
<gene>
    <name evidence="5" type="primary">alyA</name>
    <name type="ORF">DDB_G0275123</name>
</gene>
<name>LYSA_DICDI</name>
<reference key="1">
    <citation type="journal article" date="2002" name="Nature">
        <title>Sequence and analysis of chromosome 2 of Dictyostelium discoideum.</title>
        <authorList>
            <person name="Gloeckner G."/>
            <person name="Eichinger L."/>
            <person name="Szafranski K."/>
            <person name="Pachebat J.A."/>
            <person name="Bankier A.T."/>
            <person name="Dear P.H."/>
            <person name="Lehmann R."/>
            <person name="Baumgart C."/>
            <person name="Parra G."/>
            <person name="Abril J.F."/>
            <person name="Guigo R."/>
            <person name="Kumpf K."/>
            <person name="Tunggal B."/>
            <person name="Cox E.C."/>
            <person name="Quail M.A."/>
            <person name="Platzer M."/>
            <person name="Rosenthal A."/>
            <person name="Noegel A.A."/>
        </authorList>
    </citation>
    <scope>NUCLEOTIDE SEQUENCE [LARGE SCALE GENOMIC DNA]</scope>
    <source>
        <strain>AX4</strain>
    </source>
</reference>
<reference evidence="5" key="2">
    <citation type="journal article" date="2005" name="Nature">
        <title>The genome of the social amoeba Dictyostelium discoideum.</title>
        <authorList>
            <person name="Eichinger L."/>
            <person name="Pachebat J.A."/>
            <person name="Gloeckner G."/>
            <person name="Rajandream M.A."/>
            <person name="Sucgang R."/>
            <person name="Berriman M."/>
            <person name="Song J."/>
            <person name="Olsen R."/>
            <person name="Szafranski K."/>
            <person name="Xu Q."/>
            <person name="Tunggal B."/>
            <person name="Kummerfeld S."/>
            <person name="Madera M."/>
            <person name="Konfortov B.A."/>
            <person name="Rivero F."/>
            <person name="Bankier A.T."/>
            <person name="Lehmann R."/>
            <person name="Hamlin N."/>
            <person name="Davies R."/>
            <person name="Gaudet P."/>
            <person name="Fey P."/>
            <person name="Pilcher K."/>
            <person name="Chen G."/>
            <person name="Saunders D."/>
            <person name="Sodergren E.J."/>
            <person name="Davis P."/>
            <person name="Kerhornou A."/>
            <person name="Nie X."/>
            <person name="Hall N."/>
            <person name="Anjard C."/>
            <person name="Hemphill L."/>
            <person name="Bason N."/>
            <person name="Farbrother P."/>
            <person name="Desany B."/>
            <person name="Just E."/>
            <person name="Morio T."/>
            <person name="Rost R."/>
            <person name="Churcher C.M."/>
            <person name="Cooper J."/>
            <person name="Haydock S."/>
            <person name="van Driessche N."/>
            <person name="Cronin A."/>
            <person name="Goodhead I."/>
            <person name="Muzny D.M."/>
            <person name="Mourier T."/>
            <person name="Pain A."/>
            <person name="Lu M."/>
            <person name="Harper D."/>
            <person name="Lindsay R."/>
            <person name="Hauser H."/>
            <person name="James K.D."/>
            <person name="Quiles M."/>
            <person name="Madan Babu M."/>
            <person name="Saito T."/>
            <person name="Buchrieser C."/>
            <person name="Wardroper A."/>
            <person name="Felder M."/>
            <person name="Thangavelu M."/>
            <person name="Johnson D."/>
            <person name="Knights A."/>
            <person name="Loulseged H."/>
            <person name="Mungall K.L."/>
            <person name="Oliver K."/>
            <person name="Price C."/>
            <person name="Quail M.A."/>
            <person name="Urushihara H."/>
            <person name="Hernandez J."/>
            <person name="Rabbinowitsch E."/>
            <person name="Steffen D."/>
            <person name="Sanders M."/>
            <person name="Ma J."/>
            <person name="Kohara Y."/>
            <person name="Sharp S."/>
            <person name="Simmonds M.N."/>
            <person name="Spiegler S."/>
            <person name="Tivey A."/>
            <person name="Sugano S."/>
            <person name="White B."/>
            <person name="Walker D."/>
            <person name="Woodward J.R."/>
            <person name="Winckler T."/>
            <person name="Tanaka Y."/>
            <person name="Shaulsky G."/>
            <person name="Schleicher M."/>
            <person name="Weinstock G.M."/>
            <person name="Rosenthal A."/>
            <person name="Cox E.C."/>
            <person name="Chisholm R.L."/>
            <person name="Gibbs R.A."/>
            <person name="Loomis W.F."/>
            <person name="Platzer M."/>
            <person name="Kay R.R."/>
            <person name="Williams J.G."/>
            <person name="Dear P.H."/>
            <person name="Noegel A.A."/>
            <person name="Barrell B.G."/>
            <person name="Kuspa A."/>
        </authorList>
    </citation>
    <scope>NUCLEOTIDE SEQUENCE [LARGE SCALE GENOMIC DNA]</scope>
    <source>
        <strain>AX4</strain>
    </source>
</reference>
<reference evidence="4" key="3">
    <citation type="journal article" date="2004" name="Nucleic Acids Res.">
        <title>Analyses of cDNAs from growth and slug stages of Dictyostelium discoideum.</title>
        <authorList>
            <person name="Urushihara H."/>
            <person name="Morio T."/>
            <person name="Saito T."/>
            <person name="Kohara Y."/>
            <person name="Koriki E."/>
            <person name="Ochiai H."/>
            <person name="Maeda M."/>
            <person name="Williams J.G."/>
            <person name="Takeuchi I."/>
            <person name="Tanaka Y."/>
        </authorList>
    </citation>
    <scope>NUCLEOTIDE SEQUENCE [LARGE SCALE MRNA]</scope>
    <source>
        <strain evidence="2">AX4</strain>
    </source>
</reference>
<reference evidence="4" key="4">
    <citation type="journal article" date="2005" name="J. Biol. Chem.">
        <title>A Dictyostelium mutant with reduced lysozyme levels compensates by increased phagocytic activity.</title>
        <authorList>
            <person name="Mueller I."/>
            <person name="Subert N."/>
            <person name="Otto H."/>
            <person name="Herbst R."/>
            <person name="Ruehling H."/>
            <person name="Maniak M."/>
            <person name="Leippe M."/>
        </authorList>
    </citation>
    <scope>PROTEIN SEQUENCE OF 20-44</scope>
    <scope>FUNCTION</scope>
    <scope>CATALYTIC ACTIVITY</scope>
    <scope>BIOPHYSICOCHEMICAL PROPERTIES</scope>
    <scope>SUBCELLULAR LOCATION</scope>
    <scope>DISULFIDE BONDS</scope>
    <scope>MASS SPECTROMETRY</scope>
    <scope>DISRUPTION PHENOTYPE</scope>
    <source>
        <strain evidence="3">AX2</strain>
    </source>
</reference>
<dbReference type="EC" id="3.2.1.n3"/>
<dbReference type="EMBL" id="AAFI02000013">
    <property type="protein sequence ID" value="EAL69842.1"/>
    <property type="molecule type" value="Genomic_DNA"/>
</dbReference>
<dbReference type="EMBL" id="C92846">
    <property type="status" value="NOT_ANNOTATED_CDS"/>
    <property type="molecule type" value="mRNA"/>
</dbReference>
<dbReference type="RefSeq" id="XP_643739.1">
    <property type="nucleotide sequence ID" value="XM_638647.1"/>
</dbReference>
<dbReference type="FunCoup" id="Q8T1G4">
    <property type="interactions" value="512"/>
</dbReference>
<dbReference type="STRING" id="44689.Q8T1G4"/>
<dbReference type="PaxDb" id="44689-DDB0231275"/>
<dbReference type="ABCD" id="Q8T1G4">
    <property type="antibodies" value="9 sequenced antibodies"/>
</dbReference>
<dbReference type="EnsemblProtists" id="EAL69842">
    <property type="protein sequence ID" value="EAL69842"/>
    <property type="gene ID" value="DDB_G0275123"/>
</dbReference>
<dbReference type="GeneID" id="8619783"/>
<dbReference type="KEGG" id="ddi:DDB_G0275123"/>
<dbReference type="dictyBase" id="DDB_G0275123">
    <property type="gene designation" value="alyA"/>
</dbReference>
<dbReference type="VEuPathDB" id="AmoebaDB:DDB_G0275123"/>
<dbReference type="eggNOG" id="ENOG502RCK0">
    <property type="taxonomic scope" value="Eukaryota"/>
</dbReference>
<dbReference type="HOGENOM" id="CLU_1491704_0_0_1"/>
<dbReference type="InParanoid" id="Q8T1G4"/>
<dbReference type="OMA" id="FGCGKYL"/>
<dbReference type="PhylomeDB" id="Q8T1G4"/>
<dbReference type="PRO" id="PR:Q8T1G4"/>
<dbReference type="Proteomes" id="UP000002195">
    <property type="component" value="Chromosome 2"/>
</dbReference>
<dbReference type="GO" id="GO:0031410">
    <property type="term" value="C:cytoplasmic vesicle"/>
    <property type="evidence" value="ECO:0000314"/>
    <property type="project" value="UniProtKB"/>
</dbReference>
<dbReference type="GO" id="GO:0060205">
    <property type="term" value="C:cytoplasmic vesicle lumen"/>
    <property type="evidence" value="ECO:0007669"/>
    <property type="project" value="UniProtKB-SubCell"/>
</dbReference>
<dbReference type="GO" id="GO:0031983">
    <property type="term" value="C:vesicle lumen"/>
    <property type="evidence" value="ECO:0000314"/>
    <property type="project" value="UniProtKB"/>
</dbReference>
<dbReference type="GO" id="GO:0003796">
    <property type="term" value="F:lysozyme activity"/>
    <property type="evidence" value="ECO:0000314"/>
    <property type="project" value="UniProtKB"/>
</dbReference>
<dbReference type="GO" id="GO:0050830">
    <property type="term" value="P:defense response to Gram-positive bacterium"/>
    <property type="evidence" value="ECO:0000314"/>
    <property type="project" value="UniProtKB"/>
</dbReference>
<dbReference type="GO" id="GO:0031640">
    <property type="term" value="P:killing of cells of another organism"/>
    <property type="evidence" value="ECO:0007669"/>
    <property type="project" value="UniProtKB-KW"/>
</dbReference>
<dbReference type="GO" id="GO:0009253">
    <property type="term" value="P:peptidoglycan catabolic process"/>
    <property type="evidence" value="ECO:0000305"/>
    <property type="project" value="dictyBase"/>
</dbReference>
<dbReference type="GO" id="GO:0006909">
    <property type="term" value="P:phagocytosis"/>
    <property type="evidence" value="ECO:0000315"/>
    <property type="project" value="dictyBase"/>
</dbReference>
<dbReference type="GO" id="GO:0046686">
    <property type="term" value="P:response to cadmium ion"/>
    <property type="evidence" value="ECO:0007007"/>
    <property type="project" value="dictyBase"/>
</dbReference>
<comment type="function">
    <text evidence="3">Has antibacterial activity against the Gram-positive bacteria B.subtilis, B.megaterium and M.luteus. No antibacterial activity detected against the Gram-positive bacterium S.aureus or against the Gram-negative bacterium E.coli. Lacks chitinase activity.</text>
</comment>
<comment type="catalytic activity">
    <reaction evidence="3">
        <text>Hydrolysis of 1,4-beta-linkages between N-acetylmuramic acid and N-acetyl-D-glucosamine residues in a peptidoglycan.</text>
        <dbReference type="EC" id="3.2.1.n3"/>
    </reaction>
</comment>
<comment type="biophysicochemical properties">
    <temperatureDependence>
        <text evidence="3">Stable when incubated at 50 degrees Celsius for 10 minutes at pH 5.5. Activity decreases by 50% when incubated at 60 degrees Celsius for 10 minutes at pH 5.5.</text>
    </temperatureDependence>
</comment>
<comment type="subcellular location">
    <subcellularLocation>
        <location evidence="3">Cytoplasmic vesicle lumen</location>
    </subcellularLocation>
</comment>
<comment type="PTM">
    <text evidence="3 4">Contains six disulfide bonds.</text>
</comment>
<comment type="mass spectrometry" mass="12652.0" method="MALDI" evidence="3"/>
<comment type="disruption phenotype">
    <text evidence="3">Mutants have only 40% of the wild-type lysozyme activity and initially form plaques on bacterial lawns that are only half the size of wild type plaques. Despite the lysozyme activity remaining constantly at 40% of wild-type, the efficiency of plaque formation gradually increases over several weeks repeated plating until the size of mutant plaques finally exceeds that of wild-type cells by almost 2-fold.</text>
</comment>
<comment type="similarity">
    <text evidence="1">Belongs to the dictyostelium lysozyme family.</text>
</comment>
<organism>
    <name type="scientific">Dictyostelium discoideum</name>
    <name type="common">Social amoeba</name>
    <dbReference type="NCBI Taxonomy" id="44689"/>
    <lineage>
        <taxon>Eukaryota</taxon>
        <taxon>Amoebozoa</taxon>
        <taxon>Evosea</taxon>
        <taxon>Eumycetozoa</taxon>
        <taxon>Dictyostelia</taxon>
        <taxon>Dictyosteliales</taxon>
        <taxon>Dictyosteliaceae</taxon>
        <taxon>Dictyostelium</taxon>
    </lineage>
</organism>
<feature type="signal peptide" evidence="3">
    <location>
        <begin position="1"/>
        <end position="19"/>
    </location>
</feature>
<feature type="chain" id="PRO_0000315914" description="Lysozyme A" evidence="3">
    <location>
        <begin position="20"/>
        <end position="138"/>
    </location>
</feature>
<feature type="propeptide" id="PRO_0000315915" evidence="3">
    <location>
        <begin position="139"/>
        <end position="181"/>
    </location>
</feature>
<evidence type="ECO:0000255" key="1"/>
<evidence type="ECO:0000269" key="2">
    <source>
    </source>
</evidence>
<evidence type="ECO:0000269" key="3">
    <source>
    </source>
</evidence>
<evidence type="ECO:0000305" key="4"/>
<evidence type="ECO:0000312" key="5">
    <source>
        <dbReference type="EMBL" id="EAL69842.1"/>
    </source>
</evidence>
<keyword id="KW-0044">Antibiotic</keyword>
<keyword id="KW-0929">Antimicrobial</keyword>
<keyword id="KW-0081">Bacteriolytic enzyme</keyword>
<keyword id="KW-0968">Cytoplasmic vesicle</keyword>
<keyword id="KW-0903">Direct protein sequencing</keyword>
<keyword id="KW-1015">Disulfide bond</keyword>
<keyword id="KW-0326">Glycosidase</keyword>
<keyword id="KW-0378">Hydrolase</keyword>
<keyword id="KW-1185">Reference proteome</keyword>
<keyword id="KW-0732">Signal</keyword>
<proteinExistence type="evidence at protein level"/>
<sequence length="181" mass="19526">MRIAFFLLVLAVIIGFAYGYSCPKPCYGNMCCSTSPNNQYYLTDFCGSTSACGPVPSCSGALYFTADSQRFGCGKYLNLCRSGKCVKAQIYDAGPAMWVEQDAGMMIIDASPTICHVLTGGSSCGWSDHFLITATVTSLTDSRPLGPFNVTESEMAQLFIDHEIAMAQCEAEKTCNGFDLE</sequence>